<sequence length="412" mass="47770">MQFFNFLLFYPVFMSIYWIVGSIYFYFTREIRYSLNKKPDINVDELEGITFLLACYNESETIEDTLSNVLALKYEKKEIIIINDGSSDNTAELIYKIKENNDFIFVDLQENRGKANALNQGIKQASYDYVMCLDADTIVDQDAPYYMIENFKHDPKLGAVTGNPRIRNKSSILGKIQTIEYASLIGCIKRSQTLAGAVNTISGVFTLFKKSAVVDVGYWDTDMITEDIAVSWKLHLRGYRIKYEPLAMCWMLVPETLGGLWKQRVRWAQGGHEVLLRDFFSTMKTKRFPLYILMFEQIISILWVYIVLLYLGYLFITANFLDYTFMTYSFSIFLLSSFTMTFINVIQFTVALFIDSRYEKKNMAGLIFVSWYPTVYWIINAAVVLVAFPKALKRKKGGYATWSSPDRGNTQR</sequence>
<evidence type="ECO:0000250" key="1"/>
<evidence type="ECO:0000255" key="2"/>
<evidence type="ECO:0000305" key="3"/>
<organism>
    <name type="scientific">Staphylococcus aureus (strain N315)</name>
    <dbReference type="NCBI Taxonomy" id="158879"/>
    <lineage>
        <taxon>Bacteria</taxon>
        <taxon>Bacillati</taxon>
        <taxon>Bacillota</taxon>
        <taxon>Bacilli</taxon>
        <taxon>Bacillales</taxon>
        <taxon>Staphylococcaceae</taxon>
        <taxon>Staphylococcus</taxon>
    </lineage>
</organism>
<name>ICAA_STAAN</name>
<proteinExistence type="inferred from homology"/>
<feature type="chain" id="PRO_0000059278" description="Poly-beta-1,6-N-acetyl-D-glucosamine synthase">
    <location>
        <begin position="1"/>
        <end position="412"/>
    </location>
</feature>
<feature type="transmembrane region" description="Helical" evidence="2">
    <location>
        <begin position="6"/>
        <end position="28"/>
    </location>
</feature>
<feature type="transmembrane region" description="Helical" evidence="2">
    <location>
        <begin position="290"/>
        <end position="312"/>
    </location>
</feature>
<feature type="transmembrane region" description="Helical" evidence="2">
    <location>
        <begin position="332"/>
        <end position="354"/>
    </location>
</feature>
<feature type="transmembrane region" description="Helical" evidence="2">
    <location>
        <begin position="366"/>
        <end position="388"/>
    </location>
</feature>
<accession>Q7A351</accession>
<protein>
    <recommendedName>
        <fullName>Poly-beta-1,6-N-acetyl-D-glucosamine synthase</fullName>
        <shortName>PNAG synthase</shortName>
        <shortName>Poly-beta-1,6-GlcNAc synthase</shortName>
        <ecNumber>2.4.1.-</ecNumber>
    </recommendedName>
    <alternativeName>
        <fullName>Biofilm polysaccharide intercellular adhesin synthesis protein IcaA</fullName>
        <shortName>Biofilm PIA synthesis protein IcaA</shortName>
    </alternativeName>
    <alternativeName>
        <fullName>Intercellular adhesion protein A</fullName>
    </alternativeName>
    <alternativeName>
        <fullName>N-acetylglucosaminyltransferase IcaA</fullName>
    </alternativeName>
</protein>
<dbReference type="EC" id="2.4.1.-"/>
<dbReference type="EMBL" id="BA000018">
    <property type="protein sequence ID" value="BAB43764.1"/>
    <property type="molecule type" value="Genomic_DNA"/>
</dbReference>
<dbReference type="PIR" id="B90075">
    <property type="entry name" value="B90075"/>
</dbReference>
<dbReference type="RefSeq" id="WP_001159430.1">
    <property type="nucleotide sequence ID" value="NC_002745.2"/>
</dbReference>
<dbReference type="SMR" id="Q7A351"/>
<dbReference type="CAZy" id="GT2">
    <property type="family name" value="Glycosyltransferase Family 2"/>
</dbReference>
<dbReference type="EnsemblBacteria" id="BAB43764">
    <property type="protein sequence ID" value="BAB43764"/>
    <property type="gene ID" value="BAB43764"/>
</dbReference>
<dbReference type="KEGG" id="sau:SA2459"/>
<dbReference type="HOGENOM" id="CLU_023978_0_1_9"/>
<dbReference type="GO" id="GO:0005886">
    <property type="term" value="C:plasma membrane"/>
    <property type="evidence" value="ECO:0007669"/>
    <property type="project" value="UniProtKB-SubCell"/>
</dbReference>
<dbReference type="GO" id="GO:0008375">
    <property type="term" value="F:acetylglucosaminyltransferase activity"/>
    <property type="evidence" value="ECO:0007669"/>
    <property type="project" value="InterPro"/>
</dbReference>
<dbReference type="GO" id="GO:0043708">
    <property type="term" value="P:cell adhesion involved in biofilm formation"/>
    <property type="evidence" value="ECO:0007669"/>
    <property type="project" value="InterPro"/>
</dbReference>
<dbReference type="CDD" id="cd06423">
    <property type="entry name" value="CESA_like"/>
    <property type="match status" value="1"/>
</dbReference>
<dbReference type="Gene3D" id="3.90.550.10">
    <property type="entry name" value="Spore Coat Polysaccharide Biosynthesis Protein SpsA, Chain A"/>
    <property type="match status" value="1"/>
</dbReference>
<dbReference type="InterPro" id="IPR001173">
    <property type="entry name" value="Glyco_trans_2-like"/>
</dbReference>
<dbReference type="InterPro" id="IPR029044">
    <property type="entry name" value="Nucleotide-diphossugar_trans"/>
</dbReference>
<dbReference type="InterPro" id="IPR023853">
    <property type="entry name" value="PGA_PgaC/IcaA"/>
</dbReference>
<dbReference type="NCBIfam" id="TIGR03937">
    <property type="entry name" value="PgaC_IcaA"/>
    <property type="match status" value="1"/>
</dbReference>
<dbReference type="PANTHER" id="PTHR43630">
    <property type="entry name" value="POLY-BETA-1,6-N-ACETYL-D-GLUCOSAMINE SYNTHASE"/>
    <property type="match status" value="1"/>
</dbReference>
<dbReference type="PANTHER" id="PTHR43630:SF1">
    <property type="entry name" value="POLY-BETA-1,6-N-ACETYL-D-GLUCOSAMINE SYNTHASE"/>
    <property type="match status" value="1"/>
</dbReference>
<dbReference type="Pfam" id="PF00535">
    <property type="entry name" value="Glycos_transf_2"/>
    <property type="match status" value="1"/>
</dbReference>
<dbReference type="SUPFAM" id="SSF53448">
    <property type="entry name" value="Nucleotide-diphospho-sugar transferases"/>
    <property type="match status" value="1"/>
</dbReference>
<keyword id="KW-1003">Cell membrane</keyword>
<keyword id="KW-0328">Glycosyltransferase</keyword>
<keyword id="KW-0472">Membrane</keyword>
<keyword id="KW-0808">Transferase</keyword>
<keyword id="KW-0812">Transmembrane</keyword>
<keyword id="KW-1133">Transmembrane helix</keyword>
<gene>
    <name type="primary">icaA</name>
    <name type="ordered locus">SA2459</name>
</gene>
<reference key="1">
    <citation type="journal article" date="2001" name="Lancet">
        <title>Whole genome sequencing of meticillin-resistant Staphylococcus aureus.</title>
        <authorList>
            <person name="Kuroda M."/>
            <person name="Ohta T."/>
            <person name="Uchiyama I."/>
            <person name="Baba T."/>
            <person name="Yuzawa H."/>
            <person name="Kobayashi I."/>
            <person name="Cui L."/>
            <person name="Oguchi A."/>
            <person name="Aoki K."/>
            <person name="Nagai Y."/>
            <person name="Lian J.-Q."/>
            <person name="Ito T."/>
            <person name="Kanamori M."/>
            <person name="Matsumaru H."/>
            <person name="Maruyama A."/>
            <person name="Murakami H."/>
            <person name="Hosoyama A."/>
            <person name="Mizutani-Ui Y."/>
            <person name="Takahashi N.K."/>
            <person name="Sawano T."/>
            <person name="Inoue R."/>
            <person name="Kaito C."/>
            <person name="Sekimizu K."/>
            <person name="Hirakawa H."/>
            <person name="Kuhara S."/>
            <person name="Goto S."/>
            <person name="Yabuzaki J."/>
            <person name="Kanehisa M."/>
            <person name="Yamashita A."/>
            <person name="Oshima K."/>
            <person name="Furuya K."/>
            <person name="Yoshino C."/>
            <person name="Shiba T."/>
            <person name="Hattori M."/>
            <person name="Ogasawara N."/>
            <person name="Hayashi H."/>
            <person name="Hiramatsu K."/>
        </authorList>
    </citation>
    <scope>NUCLEOTIDE SEQUENCE [LARGE SCALE GENOMIC DNA]</scope>
    <source>
        <strain>N315</strain>
    </source>
</reference>
<comment type="function">
    <text evidence="1">N-acetylglucosaminyltransferase that catalyzes the polymerization of single monomer units of UDP-N-acetylglucosamine to produce the linear homomer poly-beta-1,6-N-acetyl-D-glucosamine (PNAG, also referred to as PIA), a biofilm adhesin polysaccharide. Requires IcaD for full activity (By similarity).</text>
</comment>
<comment type="subcellular location">
    <subcellularLocation>
        <location evidence="1">Cell membrane</location>
        <topology evidence="1">Multi-pass membrane protein</topology>
    </subcellularLocation>
</comment>
<comment type="similarity">
    <text evidence="3">Belongs to the glycosyltransferase 2 family.</text>
</comment>